<comment type="cofactor">
    <cofactor evidence="3">
        <name>[4Fe-4S] cluster</name>
        <dbReference type="ChEBI" id="CHEBI:49883"/>
    </cofactor>
    <text evidence="3">Binds 1 [4Fe-4S] cluster. The cluster is coordinated with 3 cysteines and an exchangeable S-adenosyl-L-methionine.</text>
</comment>
<evidence type="ECO:0000255" key="1"/>
<evidence type="ECO:0000255" key="2">
    <source>
        <dbReference type="PROSITE-ProRule" id="PRU01266"/>
    </source>
</evidence>
<evidence type="ECO:0000305" key="3"/>
<feature type="chain" id="PRO_0000107122" description="Uncharacterized protein MJ0966">
    <location>
        <begin position="1"/>
        <end position="444"/>
    </location>
</feature>
<feature type="domain" description="Radical SAM core" evidence="2">
    <location>
        <begin position="164"/>
        <end position="381"/>
    </location>
</feature>
<feature type="binding site" evidence="1">
    <location>
        <position position="178"/>
    </location>
    <ligand>
        <name>[4Fe-4S] cluster</name>
        <dbReference type="ChEBI" id="CHEBI:49883"/>
        <note>4Fe-4S-S-AdoMet</note>
    </ligand>
</feature>
<feature type="binding site" evidence="1">
    <location>
        <position position="182"/>
    </location>
    <ligand>
        <name>[4Fe-4S] cluster</name>
        <dbReference type="ChEBI" id="CHEBI:49883"/>
        <note>4Fe-4S-S-AdoMet</note>
    </ligand>
</feature>
<feature type="binding site" evidence="1">
    <location>
        <position position="185"/>
    </location>
    <ligand>
        <name>[4Fe-4S] cluster</name>
        <dbReference type="ChEBI" id="CHEBI:49883"/>
        <note>4Fe-4S-S-AdoMet</note>
    </ligand>
</feature>
<protein>
    <recommendedName>
        <fullName>Uncharacterized protein MJ0966</fullName>
    </recommendedName>
</protein>
<proteinExistence type="predicted"/>
<reference key="1">
    <citation type="journal article" date="1996" name="Science">
        <title>Complete genome sequence of the methanogenic archaeon, Methanococcus jannaschii.</title>
        <authorList>
            <person name="Bult C.J."/>
            <person name="White O."/>
            <person name="Olsen G.J."/>
            <person name="Zhou L."/>
            <person name="Fleischmann R.D."/>
            <person name="Sutton G.G."/>
            <person name="Blake J.A."/>
            <person name="FitzGerald L.M."/>
            <person name="Clayton R.A."/>
            <person name="Gocayne J.D."/>
            <person name="Kerlavage A.R."/>
            <person name="Dougherty B.A."/>
            <person name="Tomb J.-F."/>
            <person name="Adams M.D."/>
            <person name="Reich C.I."/>
            <person name="Overbeek R."/>
            <person name="Kirkness E.F."/>
            <person name="Weinstock K.G."/>
            <person name="Merrick J.M."/>
            <person name="Glodek A."/>
            <person name="Scott J.L."/>
            <person name="Geoghagen N.S.M."/>
            <person name="Weidman J.F."/>
            <person name="Fuhrmann J.L."/>
            <person name="Nguyen D."/>
            <person name="Utterback T.R."/>
            <person name="Kelley J.M."/>
            <person name="Peterson J.D."/>
            <person name="Sadow P.W."/>
            <person name="Hanna M.C."/>
            <person name="Cotton M.D."/>
            <person name="Roberts K.M."/>
            <person name="Hurst M.A."/>
            <person name="Kaine B.P."/>
            <person name="Borodovsky M."/>
            <person name="Klenk H.-P."/>
            <person name="Fraser C.M."/>
            <person name="Smith H.O."/>
            <person name="Woese C.R."/>
            <person name="Venter J.C."/>
        </authorList>
    </citation>
    <scope>NUCLEOTIDE SEQUENCE [LARGE SCALE GENOMIC DNA]</scope>
    <source>
        <strain>ATCC 43067 / DSM 2661 / JAL-1 / JCM 10045 / NBRC 100440</strain>
    </source>
</reference>
<accession>Q58376</accession>
<keyword id="KW-0004">4Fe-4S</keyword>
<keyword id="KW-0408">Iron</keyword>
<keyword id="KW-0411">Iron-sulfur</keyword>
<keyword id="KW-0479">Metal-binding</keyword>
<keyword id="KW-1185">Reference proteome</keyword>
<keyword id="KW-0949">S-adenosyl-L-methionine</keyword>
<name>Y966_METJA</name>
<dbReference type="EMBL" id="L77117">
    <property type="protein sequence ID" value="AAB98968.1"/>
    <property type="molecule type" value="Genomic_DNA"/>
</dbReference>
<dbReference type="PIR" id="F64420">
    <property type="entry name" value="F64420"/>
</dbReference>
<dbReference type="SMR" id="Q58376"/>
<dbReference type="STRING" id="243232.MJ_0966"/>
<dbReference type="PaxDb" id="243232-MJ_0966"/>
<dbReference type="EnsemblBacteria" id="AAB98968">
    <property type="protein sequence ID" value="AAB98968"/>
    <property type="gene ID" value="MJ_0966"/>
</dbReference>
<dbReference type="KEGG" id="mja:MJ_0966"/>
<dbReference type="eggNOG" id="arCOG01355">
    <property type="taxonomic scope" value="Archaea"/>
</dbReference>
<dbReference type="HOGENOM" id="CLU_011543_3_3_2"/>
<dbReference type="InParanoid" id="Q58376"/>
<dbReference type="PhylomeDB" id="Q58376"/>
<dbReference type="Proteomes" id="UP000000805">
    <property type="component" value="Chromosome"/>
</dbReference>
<dbReference type="GO" id="GO:0051539">
    <property type="term" value="F:4 iron, 4 sulfur cluster binding"/>
    <property type="evidence" value="ECO:0007669"/>
    <property type="project" value="UniProtKB-KW"/>
</dbReference>
<dbReference type="GO" id="GO:0003824">
    <property type="term" value="F:catalytic activity"/>
    <property type="evidence" value="ECO:0007669"/>
    <property type="project" value="InterPro"/>
</dbReference>
<dbReference type="GO" id="GO:0046872">
    <property type="term" value="F:metal ion binding"/>
    <property type="evidence" value="ECO:0007669"/>
    <property type="project" value="UniProtKB-KW"/>
</dbReference>
<dbReference type="CDD" id="cd01335">
    <property type="entry name" value="Radical_SAM"/>
    <property type="match status" value="1"/>
</dbReference>
<dbReference type="Gene3D" id="3.80.30.20">
    <property type="entry name" value="tm_1862 like domain"/>
    <property type="match status" value="1"/>
</dbReference>
<dbReference type="InterPro" id="IPR006638">
    <property type="entry name" value="Elp3/MiaA/NifB-like_rSAM"/>
</dbReference>
<dbReference type="InterPro" id="IPR045784">
    <property type="entry name" value="Radical_SAM_N2"/>
</dbReference>
<dbReference type="InterPro" id="IPR007197">
    <property type="entry name" value="rSAM"/>
</dbReference>
<dbReference type="InterPro" id="IPR023404">
    <property type="entry name" value="rSAM_horseshoe"/>
</dbReference>
<dbReference type="PANTHER" id="PTHR42731:SF1">
    <property type="entry name" value="RADICAL SAM DOMAIN PROTEIN"/>
    <property type="match status" value="1"/>
</dbReference>
<dbReference type="PANTHER" id="PTHR42731">
    <property type="entry name" value="SLL1084 PROTEIN"/>
    <property type="match status" value="1"/>
</dbReference>
<dbReference type="Pfam" id="PF04055">
    <property type="entry name" value="Radical_SAM"/>
    <property type="match status" value="1"/>
</dbReference>
<dbReference type="Pfam" id="PF19864">
    <property type="entry name" value="Radical_SAM_N2"/>
    <property type="match status" value="1"/>
</dbReference>
<dbReference type="SFLD" id="SFLDG01082">
    <property type="entry name" value="B12-binding_domain_containing"/>
    <property type="match status" value="1"/>
</dbReference>
<dbReference type="SFLD" id="SFLDS00029">
    <property type="entry name" value="Radical_SAM"/>
    <property type="match status" value="1"/>
</dbReference>
<dbReference type="SMART" id="SM00729">
    <property type="entry name" value="Elp3"/>
    <property type="match status" value="1"/>
</dbReference>
<dbReference type="SUPFAM" id="SSF102114">
    <property type="entry name" value="Radical SAM enzymes"/>
    <property type="match status" value="1"/>
</dbReference>
<dbReference type="PROSITE" id="PS51918">
    <property type="entry name" value="RADICAL_SAM"/>
    <property type="match status" value="1"/>
</dbReference>
<gene>
    <name type="ordered locus">MJ0966</name>
</gene>
<sequence>MIKMIKNVAIIYPNKFKAGISCLAVHVLANHLSKYRDLNVGVYFLENYDRIKNFDAIFITLQYENDYFNAIKIIKDLRKNNPNAIFVAGGPCVMENFFPIAEFFDVFIVGEIEGSDVMLKVINREFDVEGVYSKYLEKDKVKRIYPKKLTIDDYPIYQPTSEEGAYGKSFLLEIGRGCPRRCRFCLARAIYYPPRFRKLDDLMYLAEEGVKVNKVNKVALIAPSVGDYKYIVELCNFLDDMGVHISPSSLRADTLNDDLMRILKPKTLTIAPEAGSERLREFIKKDIRERDIANAIDLAKKFGVEKVKLYFMVGIPTETDEDIEELINLTKKVKKEIRKVEISVNPMIPKPHTDFEVEEFDLSSKKKIKYIEKALKKEGIRVEYENFNSMICQCILARGDENLSKYLDYSKNPTSLISALKKDRLLDKYLGRFEDKGVWKNIIL</sequence>
<organism>
    <name type="scientific">Methanocaldococcus jannaschii (strain ATCC 43067 / DSM 2661 / JAL-1 / JCM 10045 / NBRC 100440)</name>
    <name type="common">Methanococcus jannaschii</name>
    <dbReference type="NCBI Taxonomy" id="243232"/>
    <lineage>
        <taxon>Archaea</taxon>
        <taxon>Methanobacteriati</taxon>
        <taxon>Methanobacteriota</taxon>
        <taxon>Methanomada group</taxon>
        <taxon>Methanococci</taxon>
        <taxon>Methanococcales</taxon>
        <taxon>Methanocaldococcaceae</taxon>
        <taxon>Methanocaldococcus</taxon>
    </lineage>
</organism>